<organism>
    <name type="scientific">Saimiriine herpesvirus 2 (strain 11)</name>
    <name type="common">SaHV-2</name>
    <name type="synonym">Herpesvirus saimiri</name>
    <dbReference type="NCBI Taxonomy" id="10383"/>
    <lineage>
        <taxon>Viruses</taxon>
        <taxon>Duplodnaviria</taxon>
        <taxon>Heunggongvirae</taxon>
        <taxon>Peploviricota</taxon>
        <taxon>Herviviricetes</taxon>
        <taxon>Herpesvirales</taxon>
        <taxon>Orthoherpesviridae</taxon>
        <taxon>Gammaherpesvirinae</taxon>
        <taxon>Rhadinovirus</taxon>
        <taxon>Rhadinovirus saimiriinegamma2</taxon>
        <taxon>Saimiriine herpesvirus 2</taxon>
    </lineage>
</organism>
<evidence type="ECO:0000250" key="1"/>
<evidence type="ECO:0000250" key="2">
    <source>
        <dbReference type="UniProtKB" id="P10238"/>
    </source>
</evidence>
<evidence type="ECO:0000255" key="3"/>
<evidence type="ECO:0000256" key="4">
    <source>
        <dbReference type="SAM" id="MobiDB-lite"/>
    </source>
</evidence>
<evidence type="ECO:0000269" key="5">
    <source>
    </source>
</evidence>
<evidence type="ECO:0000269" key="6">
    <source>
    </source>
</evidence>
<evidence type="ECO:0000305" key="7"/>
<evidence type="ECO:0007829" key="8">
    <source>
        <dbReference type="PDB" id="2YKA"/>
    </source>
</evidence>
<evidence type="ECO:0007829" key="9">
    <source>
        <dbReference type="PDB" id="6HAT"/>
    </source>
</evidence>
<proteinExistence type="evidence at protein level"/>
<gene>
    <name type="primary">EJRF1</name>
    <name type="ORF">ORF57</name>
</gene>
<accession>P13199</accession>
<sequence length="417" mass="46816">MEDIIEGGISSDDDFDSSDSSSDEEESDTSPQIMKSDVTMASPPSTPEPSPDVSASTSNLKRERQRSPITWEHQSPLSRVYRSPSPMRFGKRPRISSNSTSRSCKTSWADRVREAAAQRRPSRPFRKPYSHPRNGPLRNGPPRAPPLLKLFDISILPKSGEPKLFLPVPSLPCQEAEKTNDKYVLAMAQRAMHDVPISSKQLTANLLPVKFKPLLSIVRYTPNYYYWVSMRKETIASANLCTVAAFLDESLCWGQQYLKNDFIFSENGKDIILDTSSALLSQLVHKIKMLPFCHCLMQTTPQDHIVKQVCYLIASNNRILDAVRYLQTSVIKSPIVLLLAYAVCLPAAIICTKNETQLYSHCMRILKEYRPGDVMNILHESLTQHLNKCPSSTCAYTTRAIVGTKANTTGLFFLPTQ</sequence>
<protein>
    <recommendedName>
        <fullName>mRNA export factor ICP27 homolog</fullName>
    </recommendedName>
    <alternativeName>
        <fullName>52 kDa immediate-early phosphoprotein</fullName>
    </alternativeName>
    <alternativeName>
        <fullName>EB2 protein homolog</fullName>
    </alternativeName>
</protein>
<keyword id="KW-0002">3D-structure</keyword>
<keyword id="KW-0010">Activator</keyword>
<keyword id="KW-0244">Early protein</keyword>
<keyword id="KW-1035">Host cytoplasm</keyword>
<keyword id="KW-1048">Host nucleus</keyword>
<keyword id="KW-0479">Metal-binding</keyword>
<keyword id="KW-1185">Reference proteome</keyword>
<keyword id="KW-0694">RNA-binding</keyword>
<keyword id="KW-0804">Transcription</keyword>
<keyword id="KW-0805">Transcription regulation</keyword>
<keyword id="KW-0862">Zinc</keyword>
<keyword id="KW-0863">Zinc-finger</keyword>
<feature type="chain" id="PRO_0000115832" description="mRNA export factor ICP27 homolog">
    <location>
        <begin position="1"/>
        <end position="417"/>
    </location>
</feature>
<feature type="zinc finger region" description="CHC2-type" evidence="2">
    <location>
        <begin position="295"/>
        <end position="394"/>
    </location>
</feature>
<feature type="region of interest" description="Disordered" evidence="4">
    <location>
        <begin position="1"/>
        <end position="143"/>
    </location>
</feature>
<feature type="region of interest" description="Interaction with RNA">
    <location>
        <begin position="64"/>
        <end position="120"/>
    </location>
</feature>
<feature type="region of interest" description="Interaction with host ALYREF or mouse ALYREF2">
    <location>
        <begin position="106"/>
        <end position="120"/>
    </location>
</feature>
<feature type="short sequence motif" description="Nuclear localization signal" evidence="3">
    <location>
        <begin position="88"/>
        <end position="94"/>
    </location>
</feature>
<feature type="short sequence motif" description="Nuclear localization signal" evidence="3">
    <location>
        <begin position="118"/>
        <end position="127"/>
    </location>
</feature>
<feature type="compositionally biased region" description="Acidic residues" evidence="4">
    <location>
        <begin position="1"/>
        <end position="28"/>
    </location>
</feature>
<feature type="compositionally biased region" description="Low complexity" evidence="4">
    <location>
        <begin position="96"/>
        <end position="107"/>
    </location>
</feature>
<feature type="compositionally biased region" description="Basic and acidic residues" evidence="4">
    <location>
        <begin position="108"/>
        <end position="117"/>
    </location>
</feature>
<feature type="compositionally biased region" description="Basic residues" evidence="4">
    <location>
        <begin position="120"/>
        <end position="130"/>
    </location>
</feature>
<feature type="compositionally biased region" description="Low complexity" evidence="4">
    <location>
        <begin position="132"/>
        <end position="141"/>
    </location>
</feature>
<feature type="binding site" evidence="2">
    <location>
        <position position="295"/>
    </location>
    <ligand>
        <name>Zn(2+)</name>
        <dbReference type="ChEBI" id="CHEBI:29105"/>
    </ligand>
</feature>
<feature type="binding site" evidence="2">
    <location>
        <position position="385"/>
    </location>
    <ligand>
        <name>Zn(2+)</name>
        <dbReference type="ChEBI" id="CHEBI:29105"/>
    </ligand>
</feature>
<feature type="binding site" evidence="2">
    <location>
        <position position="389"/>
    </location>
    <ligand>
        <name>Zn(2+)</name>
        <dbReference type="ChEBI" id="CHEBI:29105"/>
    </ligand>
</feature>
<feature type="binding site" evidence="2">
    <location>
        <position position="394"/>
    </location>
    <ligand>
        <name>Zn(2+)</name>
        <dbReference type="ChEBI" id="CHEBI:29105"/>
    </ligand>
</feature>
<feature type="helix" evidence="8">
    <location>
        <begin position="108"/>
        <end position="118"/>
    </location>
</feature>
<feature type="helix" evidence="9">
    <location>
        <begin position="153"/>
        <end position="155"/>
    </location>
</feature>
<feature type="helix" evidence="9">
    <location>
        <begin position="182"/>
        <end position="191"/>
    </location>
</feature>
<feature type="helix" evidence="9">
    <location>
        <begin position="197"/>
        <end position="200"/>
    </location>
</feature>
<feature type="strand" evidence="9">
    <location>
        <begin position="201"/>
        <end position="203"/>
    </location>
</feature>
<feature type="turn" evidence="9">
    <location>
        <begin position="204"/>
        <end position="206"/>
    </location>
</feature>
<feature type="helix" evidence="9">
    <location>
        <begin position="207"/>
        <end position="218"/>
    </location>
</feature>
<feature type="helix" evidence="9">
    <location>
        <begin position="224"/>
        <end position="236"/>
    </location>
</feature>
<feature type="helix" evidence="9">
    <location>
        <begin position="240"/>
        <end position="259"/>
    </location>
</feature>
<feature type="strand" evidence="9">
    <location>
        <begin position="266"/>
        <end position="268"/>
    </location>
</feature>
<feature type="helix" evidence="9">
    <location>
        <begin position="273"/>
        <end position="275"/>
    </location>
</feature>
<feature type="helix" evidence="9">
    <location>
        <begin position="276"/>
        <end position="289"/>
    </location>
</feature>
<feature type="helix" evidence="9">
    <location>
        <begin position="293"/>
        <end position="296"/>
    </location>
</feature>
<feature type="strand" evidence="9">
    <location>
        <begin position="298"/>
        <end position="300"/>
    </location>
</feature>
<feature type="helix" evidence="9">
    <location>
        <begin position="303"/>
        <end position="316"/>
    </location>
</feature>
<feature type="helix" evidence="9">
    <location>
        <begin position="319"/>
        <end position="326"/>
    </location>
</feature>
<feature type="helix" evidence="9">
    <location>
        <begin position="334"/>
        <end position="350"/>
    </location>
</feature>
<feature type="helix" evidence="9">
    <location>
        <begin position="353"/>
        <end position="355"/>
    </location>
</feature>
<feature type="helix" evidence="9">
    <location>
        <begin position="356"/>
        <end position="368"/>
    </location>
</feature>
<feature type="helix" evidence="9">
    <location>
        <begin position="373"/>
        <end position="388"/>
    </location>
</feature>
<feature type="helix" evidence="9">
    <location>
        <begin position="392"/>
        <end position="402"/>
    </location>
</feature>
<feature type="strand" evidence="9">
    <location>
        <begin position="414"/>
        <end position="416"/>
    </location>
</feature>
<reference key="1">
    <citation type="journal article" date="1992" name="J. Virol.">
        <title>Primary structure of the herpesvirus saimiri genome.</title>
        <authorList>
            <person name="Albrecht J.-C."/>
            <person name="Nicholas J."/>
            <person name="Biller D."/>
            <person name="Cameron K.R."/>
            <person name="Biesinger B."/>
            <person name="Newman C."/>
            <person name="Wittmann S."/>
            <person name="Craxton M.A."/>
            <person name="Coleman H."/>
            <person name="Fleckenstein B."/>
            <person name="Honess R.W."/>
        </authorList>
    </citation>
    <scope>NUCLEOTIDE SEQUENCE [LARGE SCALE GENOMIC DNA]</scope>
</reference>
<reference key="2">
    <citation type="journal article" date="1992" name="Virology">
        <title>Analysis of nucleotide sequence of the rightmost 43 kbp of herpesvirus saimiri (HVS) L-DNA: general conservation of genetic organization between HVS and Epstein-Barr virus.</title>
        <authorList>
            <person name="Nicholas J."/>
            <person name="Cameron K.R."/>
            <person name="Coleman H."/>
            <person name="Newman C."/>
            <person name="Honess R.W."/>
        </authorList>
    </citation>
    <scope>NUCLEOTIDE SEQUENCE [GENOMIC DNA]</scope>
</reference>
<reference key="3">
    <citation type="journal article" date="1988" name="J. Virol.">
        <title>Conservation of sequence and function between the product of the 52-kilodalton immediate-early gene of herpesvirus saimiri and the BMLF1-encoded transcriptional effector (EB2) of Epstein-Barr virus.</title>
        <authorList>
            <person name="Nicholas J."/>
            <person name="Gompels U.A."/>
            <person name="Craxton M.A."/>
            <person name="Honess R.W."/>
        </authorList>
    </citation>
    <scope>NUCLEOTIDE SEQUENCE [GENOMIC DNA] OF 34-417</scope>
</reference>
<reference key="4">
    <citation type="journal article" date="2011" name="PLoS Pathog.">
        <title>Structural basis for the recognition of cellular mRNA export factor REF by herpes viral proteins HSV-1 ICP27 and HVS ORF57.</title>
        <authorList>
            <person name="Tunnicliffe R.B."/>
            <person name="Hautbergue G.M."/>
            <person name="Kalra P."/>
            <person name="Jackson B.R."/>
            <person name="Whitehouse A."/>
            <person name="Wilson S.A."/>
            <person name="Golovanov A.P."/>
        </authorList>
    </citation>
    <scope>INTERACTION WITH HOST ALYREF AND WITH MOUSE ALYREF2</scope>
    <scope>FUNCTION</scope>
    <scope>SUBCELLULAR LOCATION</scope>
    <source>
        <strain>C488</strain>
    </source>
</reference>
<reference key="5">
    <citation type="journal article" date="2014" name="PLoS Pathog.">
        <title>Competitive and cooperative interactions mediate RNA transfer from herpesvirus saimiri ORF57 to the mammalian export adaptor ALYREF.</title>
        <authorList>
            <person name="Tunnicliffe R.B."/>
            <person name="Hautbergue G.M."/>
            <person name="Wilson S.A."/>
            <person name="Kalra P."/>
            <person name="Golovanov A.P."/>
        </authorList>
    </citation>
    <scope>STRUCTURE BY NMR OF 103-120 IN COMPLEX WITH HOST ALYREF2</scope>
    <scope>INTERACTION WITH HOST ALYREF2</scope>
    <scope>RNA-BINDING</scope>
    <scope>REGION</scope>
    <scope>SUBUNIT</scope>
</reference>
<name>ICP27_SHV21</name>
<comment type="function">
    <text evidence="1 5">Probably acts as a viral splicing factor that regulates viral RNA splicing. Functions as a multifunctional regulator of the expression of viral lytic genes (By similarity). Early protein that promotes the accumulation and nuclear export of viral intronless RNA transcripts by interacting with mRNAs and cellular export proteins.</text>
</comment>
<comment type="subunit">
    <text evidence="1 5 6">Homodimer. Homodimerization is required for transactivation (By similarity). Interacts with host ALYREF and with mouse ALYREF2. Associates in a complex with RNA, and host export factors NXF1/TAP and ALYREF or ALYREF2; these interactions allow nuclear export of viral transcripts.</text>
</comment>
<comment type="subcellular location">
    <subcellularLocation>
        <location evidence="1">Host cytoplasm</location>
    </subcellularLocation>
    <subcellularLocation>
        <location evidence="5">Host nucleus</location>
    </subcellularLocation>
    <text evidence="1">Shuttles between the nucleus and the cytoplasm.</text>
</comment>
<comment type="induction">
    <text>Transactivated by ORF50 protein.</text>
</comment>
<comment type="domain">
    <text>Binds viral intronless RNAs; the RNA binding site overlaps partially with the binding site for host ALYREF or ALYREF2.</text>
</comment>
<comment type="miscellaneous">
    <text evidence="1">ORF50 and ORF57 are the earliest genes expressed in the lytic cycle.</text>
</comment>
<comment type="similarity">
    <text evidence="7">Belongs to the HHV-1 ICP27 protein family.</text>
</comment>
<comment type="sequence caution" evidence="7">
    <conflict type="erroneous initiation">
        <sequence resource="EMBL-CDS" id="AAA46125"/>
    </conflict>
</comment>
<organismHost>
    <name type="scientific">Saimiri sciureus</name>
    <name type="common">Common squirrel monkey</name>
    <dbReference type="NCBI Taxonomy" id="9521"/>
</organismHost>
<dbReference type="EMBL" id="X64346">
    <property type="protein sequence ID" value="CAA45680.1"/>
    <property type="molecule type" value="Genomic_DNA"/>
</dbReference>
<dbReference type="EMBL" id="M86409">
    <property type="protein sequence ID" value="AAA46125.1"/>
    <property type="status" value="ALT_INIT"/>
    <property type="molecule type" value="Genomic_DNA"/>
</dbReference>
<dbReference type="EMBL" id="M21943">
    <property type="protein sequence ID" value="AAA66558.1"/>
    <property type="molecule type" value="Genomic_DNA"/>
</dbReference>
<dbReference type="RefSeq" id="NP_040259.1">
    <property type="nucleotide sequence ID" value="NC_001350.1"/>
</dbReference>
<dbReference type="PDB" id="2YKA">
    <property type="method" value="NMR"/>
    <property type="chains" value="B=103-120"/>
</dbReference>
<dbReference type="PDB" id="6HAT">
    <property type="method" value="X-ray"/>
    <property type="resolution" value="1.86 A"/>
    <property type="chains" value="A/B=146-417"/>
</dbReference>
<dbReference type="PDB" id="6HAU">
    <property type="method" value="X-ray"/>
    <property type="resolution" value="1.86 A"/>
    <property type="chains" value="A/B=146-417"/>
</dbReference>
<dbReference type="PDBsum" id="2YKA"/>
<dbReference type="PDBsum" id="6HAT"/>
<dbReference type="PDBsum" id="6HAU"/>
<dbReference type="BMRB" id="P13199"/>
<dbReference type="SMR" id="P13199"/>
<dbReference type="KEGG" id="vg:1682520"/>
<dbReference type="Proteomes" id="UP000000587">
    <property type="component" value="Segment"/>
</dbReference>
<dbReference type="GO" id="GO:0030430">
    <property type="term" value="C:host cell cytoplasm"/>
    <property type="evidence" value="ECO:0007669"/>
    <property type="project" value="UniProtKB-SubCell"/>
</dbReference>
<dbReference type="GO" id="GO:0042025">
    <property type="term" value="C:host cell nucleus"/>
    <property type="evidence" value="ECO:0007669"/>
    <property type="project" value="UniProtKB-SubCell"/>
</dbReference>
<dbReference type="GO" id="GO:0060090">
    <property type="term" value="F:molecular adaptor activity"/>
    <property type="evidence" value="ECO:0000314"/>
    <property type="project" value="DisProt"/>
</dbReference>
<dbReference type="GO" id="GO:0003723">
    <property type="term" value="F:RNA binding"/>
    <property type="evidence" value="ECO:0000314"/>
    <property type="project" value="DisProt"/>
</dbReference>
<dbReference type="GO" id="GO:0008270">
    <property type="term" value="F:zinc ion binding"/>
    <property type="evidence" value="ECO:0007669"/>
    <property type="project" value="UniProtKB-KW"/>
</dbReference>
<dbReference type="GO" id="GO:0006355">
    <property type="term" value="P:regulation of DNA-templated transcription"/>
    <property type="evidence" value="ECO:0007669"/>
    <property type="project" value="InterPro"/>
</dbReference>
<dbReference type="DisProt" id="DP03056"/>
<dbReference type="InterPro" id="IPR008648">
    <property type="entry name" value="ICP27-like"/>
</dbReference>
<dbReference type="Pfam" id="PF05459">
    <property type="entry name" value="Herpes_UL69"/>
    <property type="match status" value="1"/>
</dbReference>